<gene>
    <name evidence="1" type="primary">atpF</name>
</gene>
<evidence type="ECO:0000255" key="1">
    <source>
        <dbReference type="HAMAP-Rule" id="MF_01398"/>
    </source>
</evidence>
<geneLocation type="chloroplast"/>
<reference key="1">
    <citation type="journal article" date="1994" name="Proc. Natl. Acad. Sci. U.S.A.">
        <title>Loss of all ndh genes as determined by sequencing the entire chloroplast genome of the black pine Pinus thunbergii.</title>
        <authorList>
            <person name="Wakasugi T."/>
            <person name="Tsudzuki J."/>
            <person name="Ito S."/>
            <person name="Nakashima K."/>
            <person name="Tsudzuki T."/>
            <person name="Sugiura M."/>
        </authorList>
    </citation>
    <scope>NUCLEOTIDE SEQUENCE [LARGE SCALE GENOMIC DNA]</scope>
</reference>
<feature type="chain" id="PRO_0000082421" description="ATP synthase subunit b, chloroplastic">
    <location>
        <begin position="1"/>
        <end position="184"/>
    </location>
</feature>
<feature type="transmembrane region" description="Helical" evidence="1">
    <location>
        <begin position="31"/>
        <end position="49"/>
    </location>
</feature>
<dbReference type="EMBL" id="D17510">
    <property type="protein sequence ID" value="BAA23471.1"/>
    <property type="molecule type" value="Genomic_DNA"/>
</dbReference>
<dbReference type="PIR" id="T07440">
    <property type="entry name" value="T07440"/>
</dbReference>
<dbReference type="RefSeq" id="NP_042361.1">
    <property type="nucleotide sequence ID" value="NC_001631.1"/>
</dbReference>
<dbReference type="SMR" id="O62939"/>
<dbReference type="GeneID" id="809065"/>
<dbReference type="GO" id="GO:0009535">
    <property type="term" value="C:chloroplast thylakoid membrane"/>
    <property type="evidence" value="ECO:0007669"/>
    <property type="project" value="UniProtKB-SubCell"/>
</dbReference>
<dbReference type="GO" id="GO:0045259">
    <property type="term" value="C:proton-transporting ATP synthase complex"/>
    <property type="evidence" value="ECO:0007669"/>
    <property type="project" value="UniProtKB-KW"/>
</dbReference>
<dbReference type="GO" id="GO:0005524">
    <property type="term" value="F:ATP binding"/>
    <property type="evidence" value="ECO:0007669"/>
    <property type="project" value="UniProtKB-KW"/>
</dbReference>
<dbReference type="GO" id="GO:0046933">
    <property type="term" value="F:proton-transporting ATP synthase activity, rotational mechanism"/>
    <property type="evidence" value="ECO:0007669"/>
    <property type="project" value="UniProtKB-UniRule"/>
</dbReference>
<dbReference type="CDD" id="cd06503">
    <property type="entry name" value="ATP-synt_Fo_b"/>
    <property type="match status" value="1"/>
</dbReference>
<dbReference type="HAMAP" id="MF_01398">
    <property type="entry name" value="ATP_synth_b_bprime"/>
    <property type="match status" value="1"/>
</dbReference>
<dbReference type="InterPro" id="IPR002146">
    <property type="entry name" value="ATP_synth_b/b'su_bac/chlpt"/>
</dbReference>
<dbReference type="PANTHER" id="PTHR34264">
    <property type="entry name" value="ATP SYNTHASE SUBUNIT B, CHLOROPLASTIC"/>
    <property type="match status" value="1"/>
</dbReference>
<dbReference type="PANTHER" id="PTHR34264:SF3">
    <property type="entry name" value="ATP SYNTHASE SUBUNIT B, CHLOROPLASTIC"/>
    <property type="match status" value="1"/>
</dbReference>
<dbReference type="Pfam" id="PF00430">
    <property type="entry name" value="ATP-synt_B"/>
    <property type="match status" value="1"/>
</dbReference>
<name>ATPF_PINTH</name>
<organism>
    <name type="scientific">Pinus thunbergii</name>
    <name type="common">Japanese black pine</name>
    <name type="synonym">Pinus thunbergiana</name>
    <dbReference type="NCBI Taxonomy" id="3350"/>
    <lineage>
        <taxon>Eukaryota</taxon>
        <taxon>Viridiplantae</taxon>
        <taxon>Streptophyta</taxon>
        <taxon>Embryophyta</taxon>
        <taxon>Tracheophyta</taxon>
        <taxon>Spermatophyta</taxon>
        <taxon>Pinopsida</taxon>
        <taxon>Pinidae</taxon>
        <taxon>Conifers I</taxon>
        <taxon>Pinales</taxon>
        <taxon>Pinaceae</taxon>
        <taxon>Pinus</taxon>
        <taxon>Pinus subgen. Pinus</taxon>
    </lineage>
</organism>
<comment type="function">
    <text evidence="1">F(1)F(0) ATP synthase produces ATP from ADP in the presence of a proton or sodium gradient. F-type ATPases consist of two structural domains, F(1) containing the extramembraneous catalytic core and F(0) containing the membrane proton channel, linked together by a central stalk and a peripheral stalk. During catalysis, ATP synthesis in the catalytic domain of F(1) is coupled via a rotary mechanism of the central stalk subunits to proton translocation.</text>
</comment>
<comment type="function">
    <text evidence="1">Component of the F(0) channel, it forms part of the peripheral stalk, linking F(1) to F(0).</text>
</comment>
<comment type="subunit">
    <text evidence="1">F-type ATPases have 2 components, F(1) - the catalytic core - and F(0) - the membrane proton channel. F(1) has five subunits: alpha(3), beta(3), gamma(1), delta(1), epsilon(1). F(0) has four main subunits: a(1), b(1), b'(1) and c(10-14). The alpha and beta chains form an alternating ring which encloses part of the gamma chain. F(1) is attached to F(0) by a central stalk formed by the gamma and epsilon chains, while a peripheral stalk is formed by the delta, b and b' chains.</text>
</comment>
<comment type="subcellular location">
    <subcellularLocation>
        <location evidence="1">Plastid</location>
        <location evidence="1">Chloroplast thylakoid membrane</location>
        <topology evidence="1">Single-pass membrane protein</topology>
    </subcellularLocation>
</comment>
<comment type="miscellaneous">
    <text>In plastids the F-type ATPase is also known as CF(1)CF(0).</text>
</comment>
<comment type="similarity">
    <text evidence="1">Belongs to the ATPase B chain family.</text>
</comment>
<sequence length="184" mass="20890">MKNVIDPFISLSYWPSAGGFGSNTNILETNIINSSVVLSVLIYFGKGVLSNLLDNRKQKILETIRNSEELCKGAIDQLEKARACLRNVEMIADEIQVNGNSQIEREKEDLLNTASDNLEQLEDPKNETIYSEQQRAFDQIRQQVSRQALRRAIGTLNSRLNTELHLRTIDHNIGLLRTMMNTND</sequence>
<keyword id="KW-0066">ATP synthesis</keyword>
<keyword id="KW-0067">ATP-binding</keyword>
<keyword id="KW-0138">CF(0)</keyword>
<keyword id="KW-0150">Chloroplast</keyword>
<keyword id="KW-0375">Hydrogen ion transport</keyword>
<keyword id="KW-0406">Ion transport</keyword>
<keyword id="KW-0472">Membrane</keyword>
<keyword id="KW-0547">Nucleotide-binding</keyword>
<keyword id="KW-0934">Plastid</keyword>
<keyword id="KW-0793">Thylakoid</keyword>
<keyword id="KW-0812">Transmembrane</keyword>
<keyword id="KW-1133">Transmembrane helix</keyword>
<keyword id="KW-0813">Transport</keyword>
<protein>
    <recommendedName>
        <fullName evidence="1">ATP synthase subunit b, chloroplastic</fullName>
    </recommendedName>
    <alternativeName>
        <fullName evidence="1">ATP synthase F(0) sector subunit b</fullName>
    </alternativeName>
    <alternativeName>
        <fullName evidence="1">ATPase subunit I</fullName>
    </alternativeName>
</protein>
<accession>O62939</accession>
<proteinExistence type="inferred from homology"/>